<accession>B3GZ16</accession>
<gene>
    <name evidence="1" type="primary">rplV</name>
    <name type="ordered locus">APP7_1850</name>
</gene>
<sequence length="110" mass="12134">METIAKHRYARTSAQKARLVADLIRGKKVAQALEILTFTNKKAAALVKKVLESAIANAEHNDGADVDDLKVAKIFVDEGPSMKRVMPRAKGRADRILKRTSHITVVVSDR</sequence>
<organism>
    <name type="scientific">Actinobacillus pleuropneumoniae serotype 7 (strain AP76)</name>
    <dbReference type="NCBI Taxonomy" id="537457"/>
    <lineage>
        <taxon>Bacteria</taxon>
        <taxon>Pseudomonadati</taxon>
        <taxon>Pseudomonadota</taxon>
        <taxon>Gammaproteobacteria</taxon>
        <taxon>Pasteurellales</taxon>
        <taxon>Pasteurellaceae</taxon>
        <taxon>Actinobacillus</taxon>
    </lineage>
</organism>
<protein>
    <recommendedName>
        <fullName evidence="1">Large ribosomal subunit protein uL22</fullName>
    </recommendedName>
    <alternativeName>
        <fullName evidence="2">50S ribosomal protein L22</fullName>
    </alternativeName>
</protein>
<proteinExistence type="inferred from homology"/>
<dbReference type="EMBL" id="CP001091">
    <property type="protein sequence ID" value="ACE62502.1"/>
    <property type="molecule type" value="Genomic_DNA"/>
</dbReference>
<dbReference type="RefSeq" id="WP_005599292.1">
    <property type="nucleotide sequence ID" value="NC_010939.1"/>
</dbReference>
<dbReference type="SMR" id="B3GZ16"/>
<dbReference type="GeneID" id="92743650"/>
<dbReference type="KEGG" id="apa:APP7_1850"/>
<dbReference type="HOGENOM" id="CLU_083987_3_3_6"/>
<dbReference type="Proteomes" id="UP000001226">
    <property type="component" value="Chromosome"/>
</dbReference>
<dbReference type="GO" id="GO:0022625">
    <property type="term" value="C:cytosolic large ribosomal subunit"/>
    <property type="evidence" value="ECO:0007669"/>
    <property type="project" value="TreeGrafter"/>
</dbReference>
<dbReference type="GO" id="GO:0019843">
    <property type="term" value="F:rRNA binding"/>
    <property type="evidence" value="ECO:0007669"/>
    <property type="project" value="UniProtKB-UniRule"/>
</dbReference>
<dbReference type="GO" id="GO:0003735">
    <property type="term" value="F:structural constituent of ribosome"/>
    <property type="evidence" value="ECO:0007669"/>
    <property type="project" value="InterPro"/>
</dbReference>
<dbReference type="GO" id="GO:0006412">
    <property type="term" value="P:translation"/>
    <property type="evidence" value="ECO:0007669"/>
    <property type="project" value="UniProtKB-UniRule"/>
</dbReference>
<dbReference type="CDD" id="cd00336">
    <property type="entry name" value="Ribosomal_L22"/>
    <property type="match status" value="1"/>
</dbReference>
<dbReference type="FunFam" id="3.90.470.10:FF:000001">
    <property type="entry name" value="50S ribosomal protein L22"/>
    <property type="match status" value="1"/>
</dbReference>
<dbReference type="Gene3D" id="3.90.470.10">
    <property type="entry name" value="Ribosomal protein L22/L17"/>
    <property type="match status" value="1"/>
</dbReference>
<dbReference type="HAMAP" id="MF_01331_B">
    <property type="entry name" value="Ribosomal_uL22_B"/>
    <property type="match status" value="1"/>
</dbReference>
<dbReference type="InterPro" id="IPR001063">
    <property type="entry name" value="Ribosomal_uL22"/>
</dbReference>
<dbReference type="InterPro" id="IPR005727">
    <property type="entry name" value="Ribosomal_uL22_bac/chlpt-type"/>
</dbReference>
<dbReference type="InterPro" id="IPR047867">
    <property type="entry name" value="Ribosomal_uL22_bac/org-type"/>
</dbReference>
<dbReference type="InterPro" id="IPR018260">
    <property type="entry name" value="Ribosomal_uL22_CS"/>
</dbReference>
<dbReference type="InterPro" id="IPR036394">
    <property type="entry name" value="Ribosomal_uL22_sf"/>
</dbReference>
<dbReference type="NCBIfam" id="TIGR01044">
    <property type="entry name" value="rplV_bact"/>
    <property type="match status" value="1"/>
</dbReference>
<dbReference type="PANTHER" id="PTHR13501">
    <property type="entry name" value="CHLOROPLAST 50S RIBOSOMAL PROTEIN L22-RELATED"/>
    <property type="match status" value="1"/>
</dbReference>
<dbReference type="PANTHER" id="PTHR13501:SF8">
    <property type="entry name" value="LARGE RIBOSOMAL SUBUNIT PROTEIN UL22M"/>
    <property type="match status" value="1"/>
</dbReference>
<dbReference type="Pfam" id="PF00237">
    <property type="entry name" value="Ribosomal_L22"/>
    <property type="match status" value="1"/>
</dbReference>
<dbReference type="SUPFAM" id="SSF54843">
    <property type="entry name" value="Ribosomal protein L22"/>
    <property type="match status" value="1"/>
</dbReference>
<dbReference type="PROSITE" id="PS00464">
    <property type="entry name" value="RIBOSOMAL_L22"/>
    <property type="match status" value="1"/>
</dbReference>
<evidence type="ECO:0000255" key="1">
    <source>
        <dbReference type="HAMAP-Rule" id="MF_01331"/>
    </source>
</evidence>
<evidence type="ECO:0000305" key="2"/>
<keyword id="KW-0687">Ribonucleoprotein</keyword>
<keyword id="KW-0689">Ribosomal protein</keyword>
<keyword id="KW-0694">RNA-binding</keyword>
<keyword id="KW-0699">rRNA-binding</keyword>
<feature type="chain" id="PRO_1000142219" description="Large ribosomal subunit protein uL22">
    <location>
        <begin position="1"/>
        <end position="110"/>
    </location>
</feature>
<comment type="function">
    <text evidence="1">This protein binds specifically to 23S rRNA; its binding is stimulated by other ribosomal proteins, e.g. L4, L17, and L20. It is important during the early stages of 50S assembly. It makes multiple contacts with different domains of the 23S rRNA in the assembled 50S subunit and ribosome (By similarity).</text>
</comment>
<comment type="function">
    <text evidence="1">The globular domain of the protein is located near the polypeptide exit tunnel on the outside of the subunit, while an extended beta-hairpin is found that lines the wall of the exit tunnel in the center of the 70S ribosome.</text>
</comment>
<comment type="subunit">
    <text evidence="1">Part of the 50S ribosomal subunit.</text>
</comment>
<comment type="similarity">
    <text evidence="1">Belongs to the universal ribosomal protein uL22 family.</text>
</comment>
<reference key="1">
    <citation type="submission" date="2008-06" db="EMBL/GenBank/DDBJ databases">
        <title>Genome and proteome analysis of A. pleuropneumoniae serotype 7.</title>
        <authorList>
            <person name="Linke B."/>
            <person name="Buettner F."/>
            <person name="Martinez-Arias R."/>
            <person name="Goesmann A."/>
            <person name="Baltes N."/>
            <person name="Tegetmeyer H."/>
            <person name="Singh M."/>
            <person name="Gerlach G.F."/>
        </authorList>
    </citation>
    <scope>NUCLEOTIDE SEQUENCE [LARGE SCALE GENOMIC DNA]</scope>
    <source>
        <strain>AP76</strain>
    </source>
</reference>
<name>RL22_ACTP7</name>